<sequence>MATVNQLVRKPRAPKVDKTNVPALNACPQKRGVCTRVYTTTPKKPNSALRKVARVRLTNGFEVTSYIGGEGHNLQEHSVILIRGGRVKDLPGVRYHTVRGALDCAGVTSRRQSRSKYGAKRPKS</sequence>
<comment type="function">
    <text evidence="2">With S4 and S5 plays an important role in translational accuracy.</text>
</comment>
<comment type="function">
    <text evidence="2">Interacts with and stabilizes bases of the 16S rRNA that are involved in tRNA selection in the A site and with the mRNA backbone. Located at the interface of the 30S and 50S subunits, it traverses the body of the 30S subunit contacting proteins on the other side and probably holding the rRNA structure together. The combined cluster of proteins S8, S12 and S17 appears to hold together the shoulder and platform of the 30S subunit.</text>
</comment>
<comment type="subunit">
    <text evidence="2">Part of the 30S ribosomal subunit. Contacts proteins S8 and S17. May interact with IF1 in the 30S initiation complex.</text>
</comment>
<comment type="similarity">
    <text evidence="2">Belongs to the universal ribosomal protein uS12 family.</text>
</comment>
<gene>
    <name evidence="2" type="primary">rpsL</name>
    <name type="ordered locus">Shewmr4_0194</name>
</gene>
<name>RS12_SHESM</name>
<dbReference type="EMBL" id="CP000446">
    <property type="protein sequence ID" value="ABI37275.1"/>
    <property type="molecule type" value="Genomic_DNA"/>
</dbReference>
<dbReference type="RefSeq" id="WP_011070612.1">
    <property type="nucleotide sequence ID" value="NC_008321.1"/>
</dbReference>
<dbReference type="SMR" id="Q0HNU2"/>
<dbReference type="GeneID" id="75190624"/>
<dbReference type="KEGG" id="she:Shewmr4_0194"/>
<dbReference type="HOGENOM" id="CLU_104295_1_2_6"/>
<dbReference type="GO" id="GO:0015935">
    <property type="term" value="C:small ribosomal subunit"/>
    <property type="evidence" value="ECO:0007669"/>
    <property type="project" value="InterPro"/>
</dbReference>
<dbReference type="GO" id="GO:0019843">
    <property type="term" value="F:rRNA binding"/>
    <property type="evidence" value="ECO:0007669"/>
    <property type="project" value="UniProtKB-UniRule"/>
</dbReference>
<dbReference type="GO" id="GO:0003735">
    <property type="term" value="F:structural constituent of ribosome"/>
    <property type="evidence" value="ECO:0007669"/>
    <property type="project" value="InterPro"/>
</dbReference>
<dbReference type="GO" id="GO:0000049">
    <property type="term" value="F:tRNA binding"/>
    <property type="evidence" value="ECO:0007669"/>
    <property type="project" value="UniProtKB-UniRule"/>
</dbReference>
<dbReference type="GO" id="GO:0006412">
    <property type="term" value="P:translation"/>
    <property type="evidence" value="ECO:0007669"/>
    <property type="project" value="UniProtKB-UniRule"/>
</dbReference>
<dbReference type="CDD" id="cd03368">
    <property type="entry name" value="Ribosomal_S12"/>
    <property type="match status" value="1"/>
</dbReference>
<dbReference type="FunFam" id="2.40.50.140:FF:000001">
    <property type="entry name" value="30S ribosomal protein S12"/>
    <property type="match status" value="1"/>
</dbReference>
<dbReference type="Gene3D" id="2.40.50.140">
    <property type="entry name" value="Nucleic acid-binding proteins"/>
    <property type="match status" value="1"/>
</dbReference>
<dbReference type="HAMAP" id="MF_00403_B">
    <property type="entry name" value="Ribosomal_uS12_B"/>
    <property type="match status" value="1"/>
</dbReference>
<dbReference type="InterPro" id="IPR012340">
    <property type="entry name" value="NA-bd_OB-fold"/>
</dbReference>
<dbReference type="InterPro" id="IPR006032">
    <property type="entry name" value="Ribosomal_uS12"/>
</dbReference>
<dbReference type="InterPro" id="IPR005679">
    <property type="entry name" value="Ribosomal_uS12_bac"/>
</dbReference>
<dbReference type="NCBIfam" id="TIGR00981">
    <property type="entry name" value="rpsL_bact"/>
    <property type="match status" value="1"/>
</dbReference>
<dbReference type="PANTHER" id="PTHR11652">
    <property type="entry name" value="30S RIBOSOMAL PROTEIN S12 FAMILY MEMBER"/>
    <property type="match status" value="1"/>
</dbReference>
<dbReference type="Pfam" id="PF00164">
    <property type="entry name" value="Ribosom_S12_S23"/>
    <property type="match status" value="1"/>
</dbReference>
<dbReference type="PIRSF" id="PIRSF002133">
    <property type="entry name" value="Ribosomal_S12/S23"/>
    <property type="match status" value="1"/>
</dbReference>
<dbReference type="PRINTS" id="PR01034">
    <property type="entry name" value="RIBOSOMALS12"/>
</dbReference>
<dbReference type="SUPFAM" id="SSF50249">
    <property type="entry name" value="Nucleic acid-binding proteins"/>
    <property type="match status" value="1"/>
</dbReference>
<dbReference type="PROSITE" id="PS00055">
    <property type="entry name" value="RIBOSOMAL_S12"/>
    <property type="match status" value="1"/>
</dbReference>
<protein>
    <recommendedName>
        <fullName evidence="2">Small ribosomal subunit protein uS12</fullName>
    </recommendedName>
    <alternativeName>
        <fullName evidence="3">30S ribosomal protein S12</fullName>
    </alternativeName>
</protein>
<keyword id="KW-0488">Methylation</keyword>
<keyword id="KW-0687">Ribonucleoprotein</keyword>
<keyword id="KW-0689">Ribosomal protein</keyword>
<keyword id="KW-0694">RNA-binding</keyword>
<keyword id="KW-0699">rRNA-binding</keyword>
<keyword id="KW-0820">tRNA-binding</keyword>
<accession>Q0HNU2</accession>
<proteinExistence type="inferred from homology"/>
<feature type="chain" id="PRO_0000263591" description="Small ribosomal subunit protein uS12">
    <location>
        <begin position="1"/>
        <end position="124"/>
    </location>
</feature>
<feature type="modified residue" description="3-methylthioaspartic acid" evidence="1">
    <location>
        <position position="89"/>
    </location>
</feature>
<evidence type="ECO:0000250" key="1"/>
<evidence type="ECO:0000255" key="2">
    <source>
        <dbReference type="HAMAP-Rule" id="MF_00403"/>
    </source>
</evidence>
<evidence type="ECO:0000305" key="3"/>
<reference key="1">
    <citation type="submission" date="2006-08" db="EMBL/GenBank/DDBJ databases">
        <title>Complete sequence of Shewanella sp. MR-4.</title>
        <authorList>
            <consortium name="US DOE Joint Genome Institute"/>
            <person name="Copeland A."/>
            <person name="Lucas S."/>
            <person name="Lapidus A."/>
            <person name="Barry K."/>
            <person name="Detter J.C."/>
            <person name="Glavina del Rio T."/>
            <person name="Hammon N."/>
            <person name="Israni S."/>
            <person name="Dalin E."/>
            <person name="Tice H."/>
            <person name="Pitluck S."/>
            <person name="Kiss H."/>
            <person name="Brettin T."/>
            <person name="Bruce D."/>
            <person name="Han C."/>
            <person name="Tapia R."/>
            <person name="Gilna P."/>
            <person name="Schmutz J."/>
            <person name="Larimer F."/>
            <person name="Land M."/>
            <person name="Hauser L."/>
            <person name="Kyrpides N."/>
            <person name="Mikhailova N."/>
            <person name="Nealson K."/>
            <person name="Konstantinidis K."/>
            <person name="Klappenbach J."/>
            <person name="Tiedje J."/>
            <person name="Richardson P."/>
        </authorList>
    </citation>
    <scope>NUCLEOTIDE SEQUENCE [LARGE SCALE GENOMIC DNA]</scope>
    <source>
        <strain>MR-4</strain>
    </source>
</reference>
<organism>
    <name type="scientific">Shewanella sp. (strain MR-4)</name>
    <dbReference type="NCBI Taxonomy" id="60480"/>
    <lineage>
        <taxon>Bacteria</taxon>
        <taxon>Pseudomonadati</taxon>
        <taxon>Pseudomonadota</taxon>
        <taxon>Gammaproteobacteria</taxon>
        <taxon>Alteromonadales</taxon>
        <taxon>Shewanellaceae</taxon>
        <taxon>Shewanella</taxon>
    </lineage>
</organism>